<evidence type="ECO:0000255" key="1">
    <source>
        <dbReference type="HAMAP-Rule" id="MF_00632"/>
    </source>
</evidence>
<dbReference type="EMBL" id="CP000251">
    <property type="protein sequence ID" value="ABC79871.1"/>
    <property type="molecule type" value="Genomic_DNA"/>
</dbReference>
<dbReference type="RefSeq" id="WP_011419154.1">
    <property type="nucleotide sequence ID" value="NC_007760.1"/>
</dbReference>
<dbReference type="SMR" id="Q2IM40"/>
<dbReference type="STRING" id="290397.Adeh_0094"/>
<dbReference type="KEGG" id="ade:Adeh_0094"/>
<dbReference type="eggNOG" id="COG1666">
    <property type="taxonomic scope" value="Bacteria"/>
</dbReference>
<dbReference type="HOGENOM" id="CLU_099839_1_0_7"/>
<dbReference type="OrthoDB" id="9801447at2"/>
<dbReference type="Proteomes" id="UP000001935">
    <property type="component" value="Chromosome"/>
</dbReference>
<dbReference type="GO" id="GO:0005829">
    <property type="term" value="C:cytosol"/>
    <property type="evidence" value="ECO:0007669"/>
    <property type="project" value="TreeGrafter"/>
</dbReference>
<dbReference type="GO" id="GO:0000166">
    <property type="term" value="F:nucleotide binding"/>
    <property type="evidence" value="ECO:0007669"/>
    <property type="project" value="TreeGrafter"/>
</dbReference>
<dbReference type="CDD" id="cd11740">
    <property type="entry name" value="YajQ_like"/>
    <property type="match status" value="1"/>
</dbReference>
<dbReference type="Gene3D" id="3.30.70.860">
    <property type="match status" value="1"/>
</dbReference>
<dbReference type="Gene3D" id="3.30.70.990">
    <property type="entry name" value="YajQ-like, domain 2"/>
    <property type="match status" value="1"/>
</dbReference>
<dbReference type="HAMAP" id="MF_00632">
    <property type="entry name" value="YajQ"/>
    <property type="match status" value="1"/>
</dbReference>
<dbReference type="InterPro" id="IPR007551">
    <property type="entry name" value="DUF520"/>
</dbReference>
<dbReference type="InterPro" id="IPR035571">
    <property type="entry name" value="UPF0234-like_C"/>
</dbReference>
<dbReference type="InterPro" id="IPR035570">
    <property type="entry name" value="UPF0234_N"/>
</dbReference>
<dbReference type="InterPro" id="IPR036183">
    <property type="entry name" value="YajQ-like_sf"/>
</dbReference>
<dbReference type="NCBIfam" id="NF003819">
    <property type="entry name" value="PRK05412.1"/>
    <property type="match status" value="1"/>
</dbReference>
<dbReference type="PANTHER" id="PTHR30476">
    <property type="entry name" value="UPF0234 PROTEIN YAJQ"/>
    <property type="match status" value="1"/>
</dbReference>
<dbReference type="PANTHER" id="PTHR30476:SF0">
    <property type="entry name" value="UPF0234 PROTEIN YAJQ"/>
    <property type="match status" value="1"/>
</dbReference>
<dbReference type="Pfam" id="PF04461">
    <property type="entry name" value="DUF520"/>
    <property type="match status" value="1"/>
</dbReference>
<dbReference type="SUPFAM" id="SSF89963">
    <property type="entry name" value="YajQ-like"/>
    <property type="match status" value="2"/>
</dbReference>
<name>Y094_ANADE</name>
<proteinExistence type="inferred from homology"/>
<sequence>MPSFDVVSEVDLMEVENAFNQARKEIAQRFDFKGTHTELERDKEQNVLIRAGSEGRAEAALQVLMEKLAKRGVALESLDPQKLEPASGGHVRQLVKLKRGLKVEDARKIVAKVKESGIKVQAAIQGEAVRVTGKKRDDLQAAIHAIRAAGFPIPLQFQNFRE</sequence>
<gene>
    <name type="ordered locus">Adeh_0094</name>
</gene>
<accession>Q2IM40</accession>
<organism>
    <name type="scientific">Anaeromyxobacter dehalogenans (strain 2CP-C)</name>
    <dbReference type="NCBI Taxonomy" id="290397"/>
    <lineage>
        <taxon>Bacteria</taxon>
        <taxon>Pseudomonadati</taxon>
        <taxon>Myxococcota</taxon>
        <taxon>Myxococcia</taxon>
        <taxon>Myxococcales</taxon>
        <taxon>Cystobacterineae</taxon>
        <taxon>Anaeromyxobacteraceae</taxon>
        <taxon>Anaeromyxobacter</taxon>
    </lineage>
</organism>
<feature type="chain" id="PRO_0000261913" description="Nucleotide-binding protein Adeh_0094">
    <location>
        <begin position="1"/>
        <end position="162"/>
    </location>
</feature>
<keyword id="KW-0547">Nucleotide-binding</keyword>
<keyword id="KW-1185">Reference proteome</keyword>
<reference key="1">
    <citation type="submission" date="2006-01" db="EMBL/GenBank/DDBJ databases">
        <title>Complete sequence of Anaeromyxobacter dehalogenans 2CP-C.</title>
        <authorList>
            <person name="Copeland A."/>
            <person name="Lucas S."/>
            <person name="Lapidus A."/>
            <person name="Barry K."/>
            <person name="Detter J.C."/>
            <person name="Glavina T."/>
            <person name="Hammon N."/>
            <person name="Israni S."/>
            <person name="Pitluck S."/>
            <person name="Brettin T."/>
            <person name="Bruce D."/>
            <person name="Han C."/>
            <person name="Tapia R."/>
            <person name="Gilna P."/>
            <person name="Kiss H."/>
            <person name="Schmutz J."/>
            <person name="Larimer F."/>
            <person name="Land M."/>
            <person name="Kyrpides N."/>
            <person name="Anderson I."/>
            <person name="Sanford R.A."/>
            <person name="Ritalahti K.M."/>
            <person name="Thomas H.S."/>
            <person name="Kirby J.R."/>
            <person name="Zhulin I.B."/>
            <person name="Loeffler F.E."/>
            <person name="Richardson P."/>
        </authorList>
    </citation>
    <scope>NUCLEOTIDE SEQUENCE [LARGE SCALE GENOMIC DNA]</scope>
    <source>
        <strain>2CP-C</strain>
    </source>
</reference>
<comment type="function">
    <text evidence="1">Nucleotide-binding protein.</text>
</comment>
<comment type="similarity">
    <text evidence="1">Belongs to the YajQ family.</text>
</comment>
<protein>
    <recommendedName>
        <fullName evidence="1">Nucleotide-binding protein Adeh_0094</fullName>
    </recommendedName>
</protein>